<organism>
    <name type="scientific">Burkholderia pseudomallei (strain 1106a)</name>
    <dbReference type="NCBI Taxonomy" id="357348"/>
    <lineage>
        <taxon>Bacteria</taxon>
        <taxon>Pseudomonadati</taxon>
        <taxon>Pseudomonadota</taxon>
        <taxon>Betaproteobacteria</taxon>
        <taxon>Burkholderiales</taxon>
        <taxon>Burkholderiaceae</taxon>
        <taxon>Burkholderia</taxon>
        <taxon>pseudomallei group</taxon>
    </lineage>
</organism>
<dbReference type="EMBL" id="CP000572">
    <property type="protein sequence ID" value="ABN89560.1"/>
    <property type="molecule type" value="Genomic_DNA"/>
</dbReference>
<dbReference type="RefSeq" id="WP_004197938.1">
    <property type="nucleotide sequence ID" value="NC_009076.1"/>
</dbReference>
<dbReference type="SMR" id="A3P090"/>
<dbReference type="GeneID" id="93061809"/>
<dbReference type="KEGG" id="bpl:BURPS1106A_3781"/>
<dbReference type="HOGENOM" id="CLU_103849_1_2_4"/>
<dbReference type="Proteomes" id="UP000006738">
    <property type="component" value="Chromosome I"/>
</dbReference>
<dbReference type="GO" id="GO:0005829">
    <property type="term" value="C:cytosol"/>
    <property type="evidence" value="ECO:0007669"/>
    <property type="project" value="TreeGrafter"/>
</dbReference>
<dbReference type="GO" id="GO:0015935">
    <property type="term" value="C:small ribosomal subunit"/>
    <property type="evidence" value="ECO:0007669"/>
    <property type="project" value="TreeGrafter"/>
</dbReference>
<dbReference type="GO" id="GO:0019843">
    <property type="term" value="F:rRNA binding"/>
    <property type="evidence" value="ECO:0007669"/>
    <property type="project" value="UniProtKB-UniRule"/>
</dbReference>
<dbReference type="GO" id="GO:0003735">
    <property type="term" value="F:structural constituent of ribosome"/>
    <property type="evidence" value="ECO:0007669"/>
    <property type="project" value="InterPro"/>
</dbReference>
<dbReference type="GO" id="GO:0000049">
    <property type="term" value="F:tRNA binding"/>
    <property type="evidence" value="ECO:0007669"/>
    <property type="project" value="UniProtKB-UniRule"/>
</dbReference>
<dbReference type="GO" id="GO:0006412">
    <property type="term" value="P:translation"/>
    <property type="evidence" value="ECO:0007669"/>
    <property type="project" value="UniProtKB-UniRule"/>
</dbReference>
<dbReference type="FunFam" id="1.10.8.50:FF:000001">
    <property type="entry name" value="30S ribosomal protein S13"/>
    <property type="match status" value="1"/>
</dbReference>
<dbReference type="FunFam" id="4.10.910.10:FF:000001">
    <property type="entry name" value="30S ribosomal protein S13"/>
    <property type="match status" value="1"/>
</dbReference>
<dbReference type="Gene3D" id="1.10.8.50">
    <property type="match status" value="1"/>
</dbReference>
<dbReference type="Gene3D" id="4.10.910.10">
    <property type="entry name" value="30s ribosomal protein s13, domain 2"/>
    <property type="match status" value="1"/>
</dbReference>
<dbReference type="HAMAP" id="MF_01315">
    <property type="entry name" value="Ribosomal_uS13"/>
    <property type="match status" value="1"/>
</dbReference>
<dbReference type="InterPro" id="IPR027437">
    <property type="entry name" value="Rbsml_uS13_C"/>
</dbReference>
<dbReference type="InterPro" id="IPR001892">
    <property type="entry name" value="Ribosomal_uS13"/>
</dbReference>
<dbReference type="InterPro" id="IPR010979">
    <property type="entry name" value="Ribosomal_uS13-like_H2TH"/>
</dbReference>
<dbReference type="InterPro" id="IPR019980">
    <property type="entry name" value="Ribosomal_uS13_bac-type"/>
</dbReference>
<dbReference type="InterPro" id="IPR018269">
    <property type="entry name" value="Ribosomal_uS13_CS"/>
</dbReference>
<dbReference type="NCBIfam" id="TIGR03631">
    <property type="entry name" value="uS13_bact"/>
    <property type="match status" value="1"/>
</dbReference>
<dbReference type="PANTHER" id="PTHR10871">
    <property type="entry name" value="30S RIBOSOMAL PROTEIN S13/40S RIBOSOMAL PROTEIN S18"/>
    <property type="match status" value="1"/>
</dbReference>
<dbReference type="PANTHER" id="PTHR10871:SF1">
    <property type="entry name" value="SMALL RIBOSOMAL SUBUNIT PROTEIN US13M"/>
    <property type="match status" value="1"/>
</dbReference>
<dbReference type="Pfam" id="PF00416">
    <property type="entry name" value="Ribosomal_S13"/>
    <property type="match status" value="1"/>
</dbReference>
<dbReference type="PIRSF" id="PIRSF002134">
    <property type="entry name" value="Ribosomal_S13"/>
    <property type="match status" value="1"/>
</dbReference>
<dbReference type="SUPFAM" id="SSF46946">
    <property type="entry name" value="S13-like H2TH domain"/>
    <property type="match status" value="1"/>
</dbReference>
<dbReference type="PROSITE" id="PS00646">
    <property type="entry name" value="RIBOSOMAL_S13_1"/>
    <property type="match status" value="1"/>
</dbReference>
<dbReference type="PROSITE" id="PS50159">
    <property type="entry name" value="RIBOSOMAL_S13_2"/>
    <property type="match status" value="1"/>
</dbReference>
<keyword id="KW-0687">Ribonucleoprotein</keyword>
<keyword id="KW-0689">Ribosomal protein</keyword>
<keyword id="KW-0694">RNA-binding</keyword>
<keyword id="KW-0699">rRNA-binding</keyword>
<keyword id="KW-0820">tRNA-binding</keyword>
<protein>
    <recommendedName>
        <fullName evidence="1">Small ribosomal subunit protein uS13</fullName>
    </recommendedName>
    <alternativeName>
        <fullName evidence="3">30S ribosomal protein S13</fullName>
    </alternativeName>
</protein>
<name>RS13_BURP0</name>
<reference key="1">
    <citation type="journal article" date="2010" name="Genome Biol. Evol.">
        <title>Continuing evolution of Burkholderia mallei through genome reduction and large-scale rearrangements.</title>
        <authorList>
            <person name="Losada L."/>
            <person name="Ronning C.M."/>
            <person name="DeShazer D."/>
            <person name="Woods D."/>
            <person name="Fedorova N."/>
            <person name="Kim H.S."/>
            <person name="Shabalina S.A."/>
            <person name="Pearson T.R."/>
            <person name="Brinkac L."/>
            <person name="Tan P."/>
            <person name="Nandi T."/>
            <person name="Crabtree J."/>
            <person name="Badger J."/>
            <person name="Beckstrom-Sternberg S."/>
            <person name="Saqib M."/>
            <person name="Schutzer S.E."/>
            <person name="Keim P."/>
            <person name="Nierman W.C."/>
        </authorList>
    </citation>
    <scope>NUCLEOTIDE SEQUENCE [LARGE SCALE GENOMIC DNA]</scope>
    <source>
        <strain>1106a</strain>
    </source>
</reference>
<comment type="function">
    <text evidence="1">Located at the top of the head of the 30S subunit, it contacts several helices of the 16S rRNA. In the 70S ribosome it contacts the 23S rRNA (bridge B1a) and protein L5 of the 50S subunit (bridge B1b), connecting the 2 subunits; these bridges are implicated in subunit movement. Contacts the tRNAs in the A and P-sites.</text>
</comment>
<comment type="subunit">
    <text evidence="1">Part of the 30S ribosomal subunit. Forms a loose heterodimer with protein S19. Forms two bridges to the 50S subunit in the 70S ribosome.</text>
</comment>
<comment type="similarity">
    <text evidence="1">Belongs to the universal ribosomal protein uS13 family.</text>
</comment>
<gene>
    <name evidence="1" type="primary">rpsM</name>
    <name type="ordered locus">BURPS1106A_3781</name>
</gene>
<accession>A3P090</accession>
<proteinExistence type="inferred from homology"/>
<sequence>MARIAGVNIPNHQHTEIGLTAIFGIGRTRARSICVASGVAFSKKVKDLTDADLEKLREEVGKFVVEGDLRREVTMNIKRLMDLGCYRGVRHRKGLPLRGQRTRTNARTRKGPRRAAQALKK</sequence>
<feature type="chain" id="PRO_0000306578" description="Small ribosomal subunit protein uS13">
    <location>
        <begin position="1"/>
        <end position="121"/>
    </location>
</feature>
<feature type="region of interest" description="Disordered" evidence="2">
    <location>
        <begin position="94"/>
        <end position="121"/>
    </location>
</feature>
<evidence type="ECO:0000255" key="1">
    <source>
        <dbReference type="HAMAP-Rule" id="MF_01315"/>
    </source>
</evidence>
<evidence type="ECO:0000256" key="2">
    <source>
        <dbReference type="SAM" id="MobiDB-lite"/>
    </source>
</evidence>
<evidence type="ECO:0000305" key="3"/>